<proteinExistence type="evidence at protein level"/>
<evidence type="ECO:0000250" key="1"/>
<evidence type="ECO:0000256" key="2">
    <source>
        <dbReference type="SAM" id="MobiDB-lite"/>
    </source>
</evidence>
<evidence type="ECO:0000269" key="3">
    <source>
    </source>
</evidence>
<evidence type="ECO:0000305" key="4"/>
<feature type="chain" id="PRO_0000213511" description="Conserved oligomeric Golgi complex subunit 5">
    <location>
        <begin position="1"/>
        <end position="751"/>
    </location>
</feature>
<feature type="region of interest" description="Disordered" evidence="2">
    <location>
        <begin position="1"/>
        <end position="21"/>
    </location>
</feature>
<feature type="region of interest" description="Disordered" evidence="2">
    <location>
        <begin position="244"/>
        <end position="263"/>
    </location>
</feature>
<name>COG5_DROME</name>
<dbReference type="EMBL" id="AE014134">
    <property type="protein sequence ID" value="AAF53619.1"/>
    <property type="molecule type" value="Genomic_DNA"/>
</dbReference>
<dbReference type="EMBL" id="AE014134">
    <property type="protein sequence ID" value="AAN10990.1"/>
    <property type="molecule type" value="Genomic_DNA"/>
</dbReference>
<dbReference type="EMBL" id="BT003257">
    <property type="protein sequence ID" value="AAO25014.1"/>
    <property type="molecule type" value="mRNA"/>
</dbReference>
<dbReference type="EMBL" id="AY069335">
    <property type="protein sequence ID" value="AAL39480.1"/>
    <property type="status" value="ALT_INIT"/>
    <property type="molecule type" value="mRNA"/>
</dbReference>
<dbReference type="RefSeq" id="NP_001246059.1">
    <property type="nucleotide sequence ID" value="NM_001259130.2"/>
</dbReference>
<dbReference type="RefSeq" id="NP_001286015.1">
    <property type="nucleotide sequence ID" value="NM_001299086.1"/>
</dbReference>
<dbReference type="RefSeq" id="NP_001286016.1">
    <property type="nucleotide sequence ID" value="NM_001299087.1"/>
</dbReference>
<dbReference type="RefSeq" id="NP_523590.1">
    <property type="nucleotide sequence ID" value="NM_078866.4"/>
</dbReference>
<dbReference type="RefSeq" id="NP_724058.1">
    <property type="nucleotide sequence ID" value="NM_165221.3"/>
</dbReference>
<dbReference type="SMR" id="Q9VJD3"/>
<dbReference type="BioGRID" id="61050">
    <property type="interactions" value="12"/>
</dbReference>
<dbReference type="ComplexPortal" id="CPX-2794">
    <property type="entry name" value="COG tethering complex"/>
</dbReference>
<dbReference type="DIP" id="DIP-17233N"/>
<dbReference type="FunCoup" id="Q9VJD3">
    <property type="interactions" value="958"/>
</dbReference>
<dbReference type="IntAct" id="Q9VJD3">
    <property type="interactions" value="10"/>
</dbReference>
<dbReference type="STRING" id="7227.FBpp0080553"/>
<dbReference type="PaxDb" id="7227-FBpp0080552"/>
<dbReference type="DNASU" id="35054"/>
<dbReference type="EnsemblMetazoa" id="FBtr0080999">
    <property type="protein sequence ID" value="FBpp0080552"/>
    <property type="gene ID" value="FBgn0024689"/>
</dbReference>
<dbReference type="EnsemblMetazoa" id="FBtr0081000">
    <property type="protein sequence ID" value="FBpp0080553"/>
    <property type="gene ID" value="FBgn0024689"/>
</dbReference>
<dbReference type="EnsemblMetazoa" id="FBtr0305685">
    <property type="protein sequence ID" value="FBpp0296965"/>
    <property type="gene ID" value="FBgn0024689"/>
</dbReference>
<dbReference type="EnsemblMetazoa" id="FBtr0346626">
    <property type="protein sequence ID" value="FBpp0312206"/>
    <property type="gene ID" value="FBgn0024689"/>
</dbReference>
<dbReference type="EnsemblMetazoa" id="FBtr0346627">
    <property type="protein sequence ID" value="FBpp0312207"/>
    <property type="gene ID" value="FBgn0024689"/>
</dbReference>
<dbReference type="GeneID" id="35054"/>
<dbReference type="KEGG" id="dme:Dmel_CG6549"/>
<dbReference type="UCSC" id="CG6549-RC">
    <property type="organism name" value="d. melanogaster"/>
</dbReference>
<dbReference type="AGR" id="FB:FBgn0024689"/>
<dbReference type="CTD" id="100529224"/>
<dbReference type="FlyBase" id="FBgn0024689">
    <property type="gene designation" value="fws"/>
</dbReference>
<dbReference type="VEuPathDB" id="VectorBase:FBgn0024689"/>
<dbReference type="eggNOG" id="KOG2211">
    <property type="taxonomic scope" value="Eukaryota"/>
</dbReference>
<dbReference type="GeneTree" id="ENSGT00390000004586"/>
<dbReference type="HOGENOM" id="CLU_009839_1_1_1"/>
<dbReference type="InParanoid" id="Q9VJD3"/>
<dbReference type="OMA" id="MMVEYFE"/>
<dbReference type="OrthoDB" id="18786at2759"/>
<dbReference type="PhylomeDB" id="Q9VJD3"/>
<dbReference type="Reactome" id="R-DME-6807878">
    <property type="pathway name" value="COPI-mediated anterograde transport"/>
</dbReference>
<dbReference type="Reactome" id="R-DME-6811438">
    <property type="pathway name" value="Intra-Golgi traffic"/>
</dbReference>
<dbReference type="Reactome" id="R-DME-6811440">
    <property type="pathway name" value="Retrograde transport at the Trans-Golgi-Network"/>
</dbReference>
<dbReference type="SignaLink" id="Q9VJD3"/>
<dbReference type="BioGRID-ORCS" id="35054">
    <property type="hits" value="0 hits in 1 CRISPR screen"/>
</dbReference>
<dbReference type="GenomeRNAi" id="35054"/>
<dbReference type="PRO" id="PR:Q9VJD3"/>
<dbReference type="Proteomes" id="UP000000803">
    <property type="component" value="Chromosome 2L"/>
</dbReference>
<dbReference type="Bgee" id="FBgn0024689">
    <property type="expression patterns" value="Expressed in adult enteroendocrine precursor cell in adult midgut (Drosophila) and 94 other cell types or tissues"/>
</dbReference>
<dbReference type="ExpressionAtlas" id="Q9VJD3">
    <property type="expression patterns" value="baseline and differential"/>
</dbReference>
<dbReference type="GO" id="GO:0070971">
    <property type="term" value="C:endoplasmic reticulum exit site"/>
    <property type="evidence" value="ECO:0000314"/>
    <property type="project" value="FlyBase"/>
</dbReference>
<dbReference type="GO" id="GO:0005794">
    <property type="term" value="C:Golgi apparatus"/>
    <property type="evidence" value="ECO:0000314"/>
    <property type="project" value="UniProtKB"/>
</dbReference>
<dbReference type="GO" id="GO:0000139">
    <property type="term" value="C:Golgi membrane"/>
    <property type="evidence" value="ECO:0007669"/>
    <property type="project" value="UniProtKB-SubCell"/>
</dbReference>
<dbReference type="GO" id="GO:0017119">
    <property type="term" value="C:Golgi transport complex"/>
    <property type="evidence" value="ECO:0000314"/>
    <property type="project" value="FlyBase"/>
</dbReference>
<dbReference type="GO" id="GO:0001675">
    <property type="term" value="P:acrosome assembly"/>
    <property type="evidence" value="ECO:0000315"/>
    <property type="project" value="FlyBase"/>
</dbReference>
<dbReference type="GO" id="GO:0000916">
    <property type="term" value="P:actomyosin contractile ring contraction"/>
    <property type="evidence" value="ECO:0000315"/>
    <property type="project" value="FlyBase"/>
</dbReference>
<dbReference type="GO" id="GO:0006891">
    <property type="term" value="P:intra-Golgi vesicle-mediated transport"/>
    <property type="evidence" value="ECO:0000250"/>
    <property type="project" value="FlyBase"/>
</dbReference>
<dbReference type="GO" id="GO:0007112">
    <property type="term" value="P:male meiosis cytokinesis"/>
    <property type="evidence" value="ECO:0000315"/>
    <property type="project" value="UniProtKB"/>
</dbReference>
<dbReference type="GO" id="GO:0007110">
    <property type="term" value="P:meiosis I cytokinesis"/>
    <property type="evidence" value="ECO:0000315"/>
    <property type="project" value="FlyBase"/>
</dbReference>
<dbReference type="GO" id="GO:0007111">
    <property type="term" value="P:meiosis II cytokinesis"/>
    <property type="evidence" value="ECO:0000315"/>
    <property type="project" value="FlyBase"/>
</dbReference>
<dbReference type="GO" id="GO:0000212">
    <property type="term" value="P:meiotic spindle organization"/>
    <property type="evidence" value="ECO:0000315"/>
    <property type="project" value="FlyBase"/>
</dbReference>
<dbReference type="GO" id="GO:0015031">
    <property type="term" value="P:protein transport"/>
    <property type="evidence" value="ECO:0007669"/>
    <property type="project" value="UniProtKB-KW"/>
</dbReference>
<dbReference type="GO" id="GO:0007290">
    <property type="term" value="P:spermatid nucleus elongation"/>
    <property type="evidence" value="ECO:0000315"/>
    <property type="project" value="UniProtKB"/>
</dbReference>
<dbReference type="InterPro" id="IPR019465">
    <property type="entry name" value="Cog5"/>
</dbReference>
<dbReference type="InterPro" id="IPR048485">
    <property type="entry name" value="COG5_helical"/>
</dbReference>
<dbReference type="InterPro" id="IPR049176">
    <property type="entry name" value="COG5_N"/>
</dbReference>
<dbReference type="PANTHER" id="PTHR13228">
    <property type="entry name" value="CONSERVED OLIGOMERIC GOLGI COMPLEX COMPONENT 5"/>
    <property type="match status" value="1"/>
</dbReference>
<dbReference type="PANTHER" id="PTHR13228:SF3">
    <property type="entry name" value="CONSERVED OLIGOMERIC GOLGI COMPLEX SUBUNIT 5"/>
    <property type="match status" value="1"/>
</dbReference>
<dbReference type="Pfam" id="PF20649">
    <property type="entry name" value="COG5_C"/>
    <property type="match status" value="1"/>
</dbReference>
<dbReference type="Pfam" id="PF10392">
    <property type="entry name" value="COG5_N"/>
    <property type="match status" value="1"/>
</dbReference>
<keyword id="KW-0217">Developmental protein</keyword>
<keyword id="KW-0221">Differentiation</keyword>
<keyword id="KW-0333">Golgi apparatus</keyword>
<keyword id="KW-0472">Membrane</keyword>
<keyword id="KW-0653">Protein transport</keyword>
<keyword id="KW-1185">Reference proteome</keyword>
<keyword id="KW-0744">Spermatogenesis</keyword>
<keyword id="KW-0813">Transport</keyword>
<sequence>MVTGDPVATKTPNAADSDDNDFTASMSHLTIGQQIQELSKQLQNTKEELHQQVRDKHGALLQQATHAGRFDAALNALAEDVQRVRETGHRLKNQVDTQYQQVENQTQVLGRLHDVSHLLRSAGTLLSLTAKLKATKDVLRLAEIHFELGQLIEDKELKDIDFIQQERAYVISSAQKIRNLTQMQLVTGLQERNENQVVNALKIFMNFNTLEKSLDNLLATFIADMEQSLKECFAGNDISVLNKSPTHNVSKPAPSRGPGKTPQLTTTQNFRAKFWKSLHWLLYDELFETCTQIKLLKTALEQINQFGYTSESSDQCIPQRFWQQVQQLLRKSFDECPQHVTQTLQEGLSKLLTSARGLEQRLHGEFQFDNELFAPLEVGYVSKCAANFKACLAGVDLPGNETVDNFIRVASTELSAALIDSRLTNAIANVFAACGKELCTKLEAQIKLGADSKQVVDLPNLQQQQNTQLANVLFYYKDSVRRMLSDLHVHFEKTPGTAREIISRSLEQADLLIGTILQQIMESIITTISIIVLSMHREPGLNSERMSTTGPSMYMKELQEFVNRSWSHHIALFDDKQMTKKCGHELAKRCIELFLHNVCILRPLSSCGRQRLKQDCQHMEQALKPLCPNLAELGKPSRLLRAMSLLIVQTAEELVKQTIGEDSLVPSYIVLLLLFGHAGADLQSPHTTANWSNERLIEWLDGHTAEREKLELISGALQRYRDNARRKNIQQYDEVYPMMVDYFEQALKALP</sequence>
<accession>Q9VJD3</accession>
<accession>Q53YG5</accession>
<accession>Q8T0G3</accession>
<gene>
    <name type="primary">fws</name>
    <name type="ORF">CG6549</name>
</gene>
<protein>
    <recommendedName>
        <fullName>Conserved oligomeric Golgi complex subunit 5</fullName>
        <shortName>COG complex subunit 5</shortName>
    </recommendedName>
    <alternativeName>
        <fullName>Component of oligomeric Golgi complex 5</fullName>
    </alternativeName>
    <alternativeName>
        <fullName>Protein four way stop</fullName>
    </alternativeName>
</protein>
<comment type="function">
    <text evidence="3">Required for normal Golgi function and necessary during spermatogenesis. Required for cleavage furrow ingression during cytokinesis in dividing spermatocytes and for the extensive polarized cell growth that accompanies spermatid elongation.</text>
</comment>
<comment type="subunit">
    <text evidence="1">Component of the conserved oligomeric Golgi complex which is composed of eight different subunits and is required for normal Golgi morphology and localization.</text>
</comment>
<comment type="interaction">
    <interactant intactId="EBI-99764">
        <id>Q9VJD3</id>
    </interactant>
    <interactant intactId="EBI-15141584">
        <id>Q4QPW4</id>
        <label>Dmel\CG13171</label>
    </interactant>
    <organismsDiffer>false</organismsDiffer>
    <experiments>4</experiments>
</comment>
<comment type="subcellular location">
    <subcellularLocation>
        <location evidence="3">Golgi apparatus membrane</location>
        <topology evidence="3">Peripheral membrane protein</topology>
    </subcellularLocation>
    <text>Localized to Golgi membrane throughout spermatogenesis, as seen in spermatocytes and differentiating spermatids.</text>
</comment>
<comment type="developmental stage">
    <text evidence="3">Expressed in embryos, and adult males and females.</text>
</comment>
<comment type="disruption phenotype">
    <text evidence="3">Males are sterile.</text>
</comment>
<comment type="similarity">
    <text evidence="4">Belongs to the COG5 family.</text>
</comment>
<comment type="sequence caution" evidence="4">
    <conflict type="erroneous initiation">
        <sequence resource="EMBL-CDS" id="AAL39480"/>
    </conflict>
    <text>Truncated N-terminus.</text>
</comment>
<organism>
    <name type="scientific">Drosophila melanogaster</name>
    <name type="common">Fruit fly</name>
    <dbReference type="NCBI Taxonomy" id="7227"/>
    <lineage>
        <taxon>Eukaryota</taxon>
        <taxon>Metazoa</taxon>
        <taxon>Ecdysozoa</taxon>
        <taxon>Arthropoda</taxon>
        <taxon>Hexapoda</taxon>
        <taxon>Insecta</taxon>
        <taxon>Pterygota</taxon>
        <taxon>Neoptera</taxon>
        <taxon>Endopterygota</taxon>
        <taxon>Diptera</taxon>
        <taxon>Brachycera</taxon>
        <taxon>Muscomorpha</taxon>
        <taxon>Ephydroidea</taxon>
        <taxon>Drosophilidae</taxon>
        <taxon>Drosophila</taxon>
        <taxon>Sophophora</taxon>
    </lineage>
</organism>
<reference key="1">
    <citation type="journal article" date="2000" name="Science">
        <title>The genome sequence of Drosophila melanogaster.</title>
        <authorList>
            <person name="Adams M.D."/>
            <person name="Celniker S.E."/>
            <person name="Holt R.A."/>
            <person name="Evans C.A."/>
            <person name="Gocayne J.D."/>
            <person name="Amanatides P.G."/>
            <person name="Scherer S.E."/>
            <person name="Li P.W."/>
            <person name="Hoskins R.A."/>
            <person name="Galle R.F."/>
            <person name="George R.A."/>
            <person name="Lewis S.E."/>
            <person name="Richards S."/>
            <person name="Ashburner M."/>
            <person name="Henderson S.N."/>
            <person name="Sutton G.G."/>
            <person name="Wortman J.R."/>
            <person name="Yandell M.D."/>
            <person name="Zhang Q."/>
            <person name="Chen L.X."/>
            <person name="Brandon R.C."/>
            <person name="Rogers Y.-H.C."/>
            <person name="Blazej R.G."/>
            <person name="Champe M."/>
            <person name="Pfeiffer B.D."/>
            <person name="Wan K.H."/>
            <person name="Doyle C."/>
            <person name="Baxter E.G."/>
            <person name="Helt G."/>
            <person name="Nelson C.R."/>
            <person name="Miklos G.L.G."/>
            <person name="Abril J.F."/>
            <person name="Agbayani A."/>
            <person name="An H.-J."/>
            <person name="Andrews-Pfannkoch C."/>
            <person name="Baldwin D."/>
            <person name="Ballew R.M."/>
            <person name="Basu A."/>
            <person name="Baxendale J."/>
            <person name="Bayraktaroglu L."/>
            <person name="Beasley E.M."/>
            <person name="Beeson K.Y."/>
            <person name="Benos P.V."/>
            <person name="Berman B.P."/>
            <person name="Bhandari D."/>
            <person name="Bolshakov S."/>
            <person name="Borkova D."/>
            <person name="Botchan M.R."/>
            <person name="Bouck J."/>
            <person name="Brokstein P."/>
            <person name="Brottier P."/>
            <person name="Burtis K.C."/>
            <person name="Busam D.A."/>
            <person name="Butler H."/>
            <person name="Cadieu E."/>
            <person name="Center A."/>
            <person name="Chandra I."/>
            <person name="Cherry J.M."/>
            <person name="Cawley S."/>
            <person name="Dahlke C."/>
            <person name="Davenport L.B."/>
            <person name="Davies P."/>
            <person name="de Pablos B."/>
            <person name="Delcher A."/>
            <person name="Deng Z."/>
            <person name="Mays A.D."/>
            <person name="Dew I."/>
            <person name="Dietz S.M."/>
            <person name="Dodson K."/>
            <person name="Doup L.E."/>
            <person name="Downes M."/>
            <person name="Dugan-Rocha S."/>
            <person name="Dunkov B.C."/>
            <person name="Dunn P."/>
            <person name="Durbin K.J."/>
            <person name="Evangelista C.C."/>
            <person name="Ferraz C."/>
            <person name="Ferriera S."/>
            <person name="Fleischmann W."/>
            <person name="Fosler C."/>
            <person name="Gabrielian A.E."/>
            <person name="Garg N.S."/>
            <person name="Gelbart W.M."/>
            <person name="Glasser K."/>
            <person name="Glodek A."/>
            <person name="Gong F."/>
            <person name="Gorrell J.H."/>
            <person name="Gu Z."/>
            <person name="Guan P."/>
            <person name="Harris M."/>
            <person name="Harris N.L."/>
            <person name="Harvey D.A."/>
            <person name="Heiman T.J."/>
            <person name="Hernandez J.R."/>
            <person name="Houck J."/>
            <person name="Hostin D."/>
            <person name="Houston K.A."/>
            <person name="Howland T.J."/>
            <person name="Wei M.-H."/>
            <person name="Ibegwam C."/>
            <person name="Jalali M."/>
            <person name="Kalush F."/>
            <person name="Karpen G.H."/>
            <person name="Ke Z."/>
            <person name="Kennison J.A."/>
            <person name="Ketchum K.A."/>
            <person name="Kimmel B.E."/>
            <person name="Kodira C.D."/>
            <person name="Kraft C.L."/>
            <person name="Kravitz S."/>
            <person name="Kulp D."/>
            <person name="Lai Z."/>
            <person name="Lasko P."/>
            <person name="Lei Y."/>
            <person name="Levitsky A.A."/>
            <person name="Li J.H."/>
            <person name="Li Z."/>
            <person name="Liang Y."/>
            <person name="Lin X."/>
            <person name="Liu X."/>
            <person name="Mattei B."/>
            <person name="McIntosh T.C."/>
            <person name="McLeod M.P."/>
            <person name="McPherson D."/>
            <person name="Merkulov G."/>
            <person name="Milshina N.V."/>
            <person name="Mobarry C."/>
            <person name="Morris J."/>
            <person name="Moshrefi A."/>
            <person name="Mount S.M."/>
            <person name="Moy M."/>
            <person name="Murphy B."/>
            <person name="Murphy L."/>
            <person name="Muzny D.M."/>
            <person name="Nelson D.L."/>
            <person name="Nelson D.R."/>
            <person name="Nelson K.A."/>
            <person name="Nixon K."/>
            <person name="Nusskern D.R."/>
            <person name="Pacleb J.M."/>
            <person name="Palazzolo M."/>
            <person name="Pittman G.S."/>
            <person name="Pan S."/>
            <person name="Pollard J."/>
            <person name="Puri V."/>
            <person name="Reese M.G."/>
            <person name="Reinert K."/>
            <person name="Remington K."/>
            <person name="Saunders R.D.C."/>
            <person name="Scheeler F."/>
            <person name="Shen H."/>
            <person name="Shue B.C."/>
            <person name="Siden-Kiamos I."/>
            <person name="Simpson M."/>
            <person name="Skupski M.P."/>
            <person name="Smith T.J."/>
            <person name="Spier E."/>
            <person name="Spradling A.C."/>
            <person name="Stapleton M."/>
            <person name="Strong R."/>
            <person name="Sun E."/>
            <person name="Svirskas R."/>
            <person name="Tector C."/>
            <person name="Turner R."/>
            <person name="Venter E."/>
            <person name="Wang A.H."/>
            <person name="Wang X."/>
            <person name="Wang Z.-Y."/>
            <person name="Wassarman D.A."/>
            <person name="Weinstock G.M."/>
            <person name="Weissenbach J."/>
            <person name="Williams S.M."/>
            <person name="Woodage T."/>
            <person name="Worley K.C."/>
            <person name="Wu D."/>
            <person name="Yang S."/>
            <person name="Yao Q.A."/>
            <person name="Ye J."/>
            <person name="Yeh R.-F."/>
            <person name="Zaveri J.S."/>
            <person name="Zhan M."/>
            <person name="Zhang G."/>
            <person name="Zhao Q."/>
            <person name="Zheng L."/>
            <person name="Zheng X.H."/>
            <person name="Zhong F.N."/>
            <person name="Zhong W."/>
            <person name="Zhou X."/>
            <person name="Zhu S.C."/>
            <person name="Zhu X."/>
            <person name="Smith H.O."/>
            <person name="Gibbs R.A."/>
            <person name="Myers E.W."/>
            <person name="Rubin G.M."/>
            <person name="Venter J.C."/>
        </authorList>
    </citation>
    <scope>NUCLEOTIDE SEQUENCE [LARGE SCALE GENOMIC DNA]</scope>
    <source>
        <strain>Berkeley</strain>
    </source>
</reference>
<reference key="2">
    <citation type="journal article" date="2002" name="Genome Biol.">
        <title>Annotation of the Drosophila melanogaster euchromatic genome: a systematic review.</title>
        <authorList>
            <person name="Misra S."/>
            <person name="Crosby M.A."/>
            <person name="Mungall C.J."/>
            <person name="Matthews B.B."/>
            <person name="Campbell K.S."/>
            <person name="Hradecky P."/>
            <person name="Huang Y."/>
            <person name="Kaminker J.S."/>
            <person name="Millburn G.H."/>
            <person name="Prochnik S.E."/>
            <person name="Smith C.D."/>
            <person name="Tupy J.L."/>
            <person name="Whitfield E.J."/>
            <person name="Bayraktaroglu L."/>
            <person name="Berman B.P."/>
            <person name="Bettencourt B.R."/>
            <person name="Celniker S.E."/>
            <person name="de Grey A.D.N.J."/>
            <person name="Drysdale R.A."/>
            <person name="Harris N.L."/>
            <person name="Richter J."/>
            <person name="Russo S."/>
            <person name="Schroeder A.J."/>
            <person name="Shu S.Q."/>
            <person name="Stapleton M."/>
            <person name="Yamada C."/>
            <person name="Ashburner M."/>
            <person name="Gelbart W.M."/>
            <person name="Rubin G.M."/>
            <person name="Lewis S.E."/>
        </authorList>
    </citation>
    <scope>GENOME REANNOTATION</scope>
    <source>
        <strain>Berkeley</strain>
    </source>
</reference>
<reference key="3">
    <citation type="submission" date="2003-01" db="EMBL/GenBank/DDBJ databases">
        <authorList>
            <person name="Stapleton M."/>
            <person name="Brokstein P."/>
            <person name="Hong L."/>
            <person name="Agbayani A."/>
            <person name="Carlson J.W."/>
            <person name="Champe M."/>
            <person name="Chavez C."/>
            <person name="Dorsett V."/>
            <person name="Dresnek D."/>
            <person name="Farfan D."/>
            <person name="Frise E."/>
            <person name="George R.A."/>
            <person name="Gonzalez M."/>
            <person name="Guarin H."/>
            <person name="Kronmiller B."/>
            <person name="Li P.W."/>
            <person name="Liao G."/>
            <person name="Miranda A."/>
            <person name="Mungall C.J."/>
            <person name="Nunoo J."/>
            <person name="Pacleb J.M."/>
            <person name="Paragas V."/>
            <person name="Park S."/>
            <person name="Patel S."/>
            <person name="Phouanenavong S."/>
            <person name="Wan K.H."/>
            <person name="Yu C."/>
            <person name="Lewis S.E."/>
            <person name="Rubin G.M."/>
            <person name="Celniker S.E."/>
        </authorList>
    </citation>
    <scope>NUCLEOTIDE SEQUENCE [LARGE SCALE MRNA]</scope>
    <source>
        <strain>Berkeley</strain>
        <tissue>Embryo</tissue>
    </source>
</reference>
<reference key="4">
    <citation type="journal article" date="2002" name="Genome Biol.">
        <title>A Drosophila full-length cDNA resource.</title>
        <authorList>
            <person name="Stapleton M."/>
            <person name="Carlson J.W."/>
            <person name="Brokstein P."/>
            <person name="Yu C."/>
            <person name="Champe M."/>
            <person name="George R.A."/>
            <person name="Guarin H."/>
            <person name="Kronmiller B."/>
            <person name="Pacleb J.M."/>
            <person name="Park S."/>
            <person name="Wan K.H."/>
            <person name="Rubin G.M."/>
            <person name="Celniker S.E."/>
        </authorList>
    </citation>
    <scope>NUCLEOTIDE SEQUENCE [LARGE SCALE MRNA] OF 406-751</scope>
    <source>
        <strain>Berkeley</strain>
        <tissue>Embryo</tissue>
    </source>
</reference>
<reference key="5">
    <citation type="journal article" date="2003" name="Mol. Biol. Cell">
        <title>The Drosophila Cog5 homologue is required for cytokinesis, cell elongation, and assembly of specialized Golgi architecture during spermatogenesis.</title>
        <authorList>
            <person name="Farkas R.M."/>
            <person name="Giansanti M.G."/>
            <person name="Gatti M."/>
            <person name="Fuller M.T."/>
        </authorList>
    </citation>
    <scope>FUNCTION</scope>
    <scope>SUBCELLULAR LOCATION</scope>
    <scope>DEVELOPMENTAL STAGE</scope>
    <scope>DISRUPTION PHENOTYPE</scope>
</reference>